<dbReference type="EC" id="2.3.1.15" evidence="1"/>
<dbReference type="EMBL" id="CP001657">
    <property type="protein sequence ID" value="ACT11567.1"/>
    <property type="molecule type" value="Genomic_DNA"/>
</dbReference>
<dbReference type="RefSeq" id="WP_012773220.1">
    <property type="nucleotide sequence ID" value="NC_012917.1"/>
</dbReference>
<dbReference type="SMR" id="C6DKD0"/>
<dbReference type="STRING" id="561230.PC1_0512"/>
<dbReference type="KEGG" id="pct:PC1_0512"/>
<dbReference type="eggNOG" id="COG2937">
    <property type="taxonomic scope" value="Bacteria"/>
</dbReference>
<dbReference type="HOGENOM" id="CLU_015407_0_0_6"/>
<dbReference type="OrthoDB" id="335193at2"/>
<dbReference type="UniPathway" id="UPA00557">
    <property type="reaction ID" value="UER00612"/>
</dbReference>
<dbReference type="Proteomes" id="UP000002736">
    <property type="component" value="Chromosome"/>
</dbReference>
<dbReference type="GO" id="GO:0005886">
    <property type="term" value="C:plasma membrane"/>
    <property type="evidence" value="ECO:0007669"/>
    <property type="project" value="UniProtKB-SubCell"/>
</dbReference>
<dbReference type="GO" id="GO:0004366">
    <property type="term" value="F:glycerol-3-phosphate O-acyltransferase activity"/>
    <property type="evidence" value="ECO:0007669"/>
    <property type="project" value="UniProtKB-UniRule"/>
</dbReference>
<dbReference type="GO" id="GO:0016024">
    <property type="term" value="P:CDP-diacylglycerol biosynthetic process"/>
    <property type="evidence" value="ECO:0007669"/>
    <property type="project" value="UniProtKB-UniRule"/>
</dbReference>
<dbReference type="GO" id="GO:0006631">
    <property type="term" value="P:fatty acid metabolic process"/>
    <property type="evidence" value="ECO:0007669"/>
    <property type="project" value="TreeGrafter"/>
</dbReference>
<dbReference type="CDD" id="cd07993">
    <property type="entry name" value="LPLAT_DHAPAT-like"/>
    <property type="match status" value="1"/>
</dbReference>
<dbReference type="HAMAP" id="MF_00393">
    <property type="entry name" value="Glyc3P_acyltrans"/>
    <property type="match status" value="1"/>
</dbReference>
<dbReference type="InterPro" id="IPR022284">
    <property type="entry name" value="GPAT/DHAPAT"/>
</dbReference>
<dbReference type="InterPro" id="IPR045520">
    <property type="entry name" value="GPAT/DHAPAT_C"/>
</dbReference>
<dbReference type="InterPro" id="IPR041728">
    <property type="entry name" value="GPAT/DHAPAT_LPLAT"/>
</dbReference>
<dbReference type="InterPro" id="IPR028354">
    <property type="entry name" value="GPAT_PlsB"/>
</dbReference>
<dbReference type="InterPro" id="IPR002123">
    <property type="entry name" value="Plipid/glycerol_acylTrfase"/>
</dbReference>
<dbReference type="NCBIfam" id="TIGR03703">
    <property type="entry name" value="plsB"/>
    <property type="match status" value="1"/>
</dbReference>
<dbReference type="NCBIfam" id="NF003441">
    <property type="entry name" value="PRK04974.1"/>
    <property type="match status" value="1"/>
</dbReference>
<dbReference type="PANTHER" id="PTHR12563:SF17">
    <property type="entry name" value="DIHYDROXYACETONE PHOSPHATE ACYLTRANSFERASE"/>
    <property type="match status" value="1"/>
</dbReference>
<dbReference type="PANTHER" id="PTHR12563">
    <property type="entry name" value="GLYCEROL-3-PHOSPHATE ACYLTRANSFERASE"/>
    <property type="match status" value="1"/>
</dbReference>
<dbReference type="Pfam" id="PF01553">
    <property type="entry name" value="Acyltransferase"/>
    <property type="match status" value="1"/>
</dbReference>
<dbReference type="Pfam" id="PF19277">
    <property type="entry name" value="GPAT_C"/>
    <property type="match status" value="1"/>
</dbReference>
<dbReference type="PIRSF" id="PIRSF500064">
    <property type="entry name" value="GPAT"/>
    <property type="match status" value="1"/>
</dbReference>
<dbReference type="PIRSF" id="PIRSF000437">
    <property type="entry name" value="GPAT_DHAPAT"/>
    <property type="match status" value="1"/>
</dbReference>
<dbReference type="SMART" id="SM00563">
    <property type="entry name" value="PlsC"/>
    <property type="match status" value="1"/>
</dbReference>
<dbReference type="SUPFAM" id="SSF69593">
    <property type="entry name" value="Glycerol-3-phosphate (1)-acyltransferase"/>
    <property type="match status" value="1"/>
</dbReference>
<sequence>MSGWRKIYYKLLNLPLKLLVKSKVIPADPVVELGLDPSRPILYVLPYNSQADLLTLRAKCLALGLPDPSQSFEFNGVELPSHVFINDGPRVFRYYVPKQKSVKLFHDYLDLHRANPDLDVQMVPVSVMFGRSPGREGHSQATPHLRLLNGIEKFFAVLWLGRDSFVRFSSPVSLRYMATEHGTDKTIAHKLARVARMHFSRQRLAAVGPRLPVRQELFNKLLDSKAIKKAVDDEARSKKISHEKAQQNAIALMEEIAADFSYEAVRLSDRVLSWTWNRLYQGINVHNAERVRQLAQDGHGIVYVPCHRSHMDYLLLSYVLYHQGLVPPHIAAGINLNFWPAGPIFRRLGAFFIRRTFKGNKLYSTIFREYLGELFARGYSVEYFMEGGRSRTGRLLEPKTGTLAMTIQAMLRGGTRPITLVPIYVGYEHVMEVGTYAKELRGAVKEKEGFMQMVRGLRKLRNLGQGYVNFGEPLPLTTYLNQHVPQWRDAIDPIEAQRPSWLTPTVQDISMDIMVRINNSAAANAMNLCSTALLASRQRSLTREQMQEQLDCYLQLLRQVPYHKDITVPKKTADELLEHALSMNKFEVEKDSIGDIIILPREQAVLMTYYRNNIQHLLVLPSLIASIVIHHRRITLAEVVRQIALIYPLLQSELFLHYSKEQLPGVLETLANELVQQQLLCSRDGELAINPPRIRTLQLLSAGVRETLQRYAITLSLLCANPEINRGTLEKESRNMAQRLSVLHGINAPEFFDKAVFSTLVATLRTEGYITDSAEAAQGDIVAIYNILGDLITPEVRLTIESASSSAEMEAESQAVEETTQE</sequence>
<gene>
    <name evidence="1" type="primary">plsB</name>
    <name type="ordered locus">PC1_0512</name>
</gene>
<feature type="chain" id="PRO_1000205851" description="Glycerol-3-phosphate acyltransferase">
    <location>
        <begin position="1"/>
        <end position="822"/>
    </location>
</feature>
<feature type="region of interest" description="Disordered" evidence="2">
    <location>
        <begin position="803"/>
        <end position="822"/>
    </location>
</feature>
<feature type="short sequence motif" description="HXXXXD motif">
    <location>
        <begin position="306"/>
        <end position="311"/>
    </location>
</feature>
<keyword id="KW-0012">Acyltransferase</keyword>
<keyword id="KW-0997">Cell inner membrane</keyword>
<keyword id="KW-1003">Cell membrane</keyword>
<keyword id="KW-0444">Lipid biosynthesis</keyword>
<keyword id="KW-0443">Lipid metabolism</keyword>
<keyword id="KW-0472">Membrane</keyword>
<keyword id="KW-0594">Phospholipid biosynthesis</keyword>
<keyword id="KW-1208">Phospholipid metabolism</keyword>
<keyword id="KW-0808">Transferase</keyword>
<comment type="catalytic activity">
    <reaction evidence="1">
        <text>sn-glycerol 3-phosphate + an acyl-CoA = a 1-acyl-sn-glycero-3-phosphate + CoA</text>
        <dbReference type="Rhea" id="RHEA:15325"/>
        <dbReference type="ChEBI" id="CHEBI:57287"/>
        <dbReference type="ChEBI" id="CHEBI:57597"/>
        <dbReference type="ChEBI" id="CHEBI:57970"/>
        <dbReference type="ChEBI" id="CHEBI:58342"/>
        <dbReference type="EC" id="2.3.1.15"/>
    </reaction>
</comment>
<comment type="pathway">
    <text evidence="1">Phospholipid metabolism; CDP-diacylglycerol biosynthesis; CDP-diacylglycerol from sn-glycerol 3-phosphate: step 1/3.</text>
</comment>
<comment type="subcellular location">
    <subcellularLocation>
        <location evidence="1">Cell inner membrane</location>
        <topology evidence="1">Peripheral membrane protein</topology>
        <orientation evidence="1">Cytoplasmic side</orientation>
    </subcellularLocation>
</comment>
<comment type="domain">
    <text evidence="1">The HXXXXD motif is essential for acyltransferase activity and may constitute the binding site for the phosphate moiety of the glycerol-3-phosphate.</text>
</comment>
<comment type="similarity">
    <text evidence="1">Belongs to the GPAT/DAPAT family.</text>
</comment>
<organism>
    <name type="scientific">Pectobacterium carotovorum subsp. carotovorum (strain PC1)</name>
    <dbReference type="NCBI Taxonomy" id="561230"/>
    <lineage>
        <taxon>Bacteria</taxon>
        <taxon>Pseudomonadati</taxon>
        <taxon>Pseudomonadota</taxon>
        <taxon>Gammaproteobacteria</taxon>
        <taxon>Enterobacterales</taxon>
        <taxon>Pectobacteriaceae</taxon>
        <taxon>Pectobacterium</taxon>
    </lineage>
</organism>
<reference key="1">
    <citation type="submission" date="2009-07" db="EMBL/GenBank/DDBJ databases">
        <title>Complete sequence of Pectobacterium carotovorum subsp. carotovorum PC1.</title>
        <authorList>
            <consortium name="US DOE Joint Genome Institute"/>
            <person name="Lucas S."/>
            <person name="Copeland A."/>
            <person name="Lapidus A."/>
            <person name="Glavina del Rio T."/>
            <person name="Tice H."/>
            <person name="Bruce D."/>
            <person name="Goodwin L."/>
            <person name="Pitluck S."/>
            <person name="Munk A.C."/>
            <person name="Brettin T."/>
            <person name="Detter J.C."/>
            <person name="Han C."/>
            <person name="Tapia R."/>
            <person name="Larimer F."/>
            <person name="Land M."/>
            <person name="Hauser L."/>
            <person name="Kyrpides N."/>
            <person name="Mikhailova N."/>
            <person name="Balakrishnan V."/>
            <person name="Glasner J."/>
            <person name="Perna N.T."/>
        </authorList>
    </citation>
    <scope>NUCLEOTIDE SEQUENCE [LARGE SCALE GENOMIC DNA]</scope>
    <source>
        <strain>PC1</strain>
    </source>
</reference>
<protein>
    <recommendedName>
        <fullName evidence="1">Glycerol-3-phosphate acyltransferase</fullName>
        <shortName evidence="1">GPAT</shortName>
        <ecNumber evidence="1">2.3.1.15</ecNumber>
    </recommendedName>
</protein>
<accession>C6DKD0</accession>
<name>PLSB_PECCP</name>
<proteinExistence type="inferred from homology"/>
<evidence type="ECO:0000255" key="1">
    <source>
        <dbReference type="HAMAP-Rule" id="MF_00393"/>
    </source>
</evidence>
<evidence type="ECO:0000256" key="2">
    <source>
        <dbReference type="SAM" id="MobiDB-lite"/>
    </source>
</evidence>